<proteinExistence type="evidence at protein level"/>
<organism>
    <name type="scientific">Homo sapiens</name>
    <name type="common">Human</name>
    <dbReference type="NCBI Taxonomy" id="9606"/>
    <lineage>
        <taxon>Eukaryota</taxon>
        <taxon>Metazoa</taxon>
        <taxon>Chordata</taxon>
        <taxon>Craniata</taxon>
        <taxon>Vertebrata</taxon>
        <taxon>Euteleostomi</taxon>
        <taxon>Mammalia</taxon>
        <taxon>Eutheria</taxon>
        <taxon>Euarchontoglires</taxon>
        <taxon>Primates</taxon>
        <taxon>Haplorrhini</taxon>
        <taxon>Catarrhini</taxon>
        <taxon>Hominidae</taxon>
        <taxon>Homo</taxon>
    </lineage>
</organism>
<dbReference type="EC" id="6.3.2.3" evidence="5 7"/>
<dbReference type="EMBL" id="L42531">
    <property type="protein sequence ID" value="AAA69492.1"/>
    <property type="molecule type" value="mRNA"/>
</dbReference>
<dbReference type="EMBL" id="AB459500">
    <property type="protein sequence ID" value="BAG75452.1"/>
    <property type="molecule type" value="mRNA"/>
</dbReference>
<dbReference type="EMBL" id="U34683">
    <property type="protein sequence ID" value="AAB62390.1"/>
    <property type="molecule type" value="mRNA"/>
</dbReference>
<dbReference type="EMBL" id="AK312492">
    <property type="protein sequence ID" value="BAG35394.1"/>
    <property type="molecule type" value="mRNA"/>
</dbReference>
<dbReference type="EMBL" id="DQ074975">
    <property type="protein sequence ID" value="AAY57328.1"/>
    <property type="molecule type" value="Genomic_DNA"/>
</dbReference>
<dbReference type="EMBL" id="AL133324">
    <property type="status" value="NOT_ANNOTATED_CDS"/>
    <property type="molecule type" value="Genomic_DNA"/>
</dbReference>
<dbReference type="EMBL" id="CH471077">
    <property type="protein sequence ID" value="EAW76239.1"/>
    <property type="molecule type" value="Genomic_DNA"/>
</dbReference>
<dbReference type="EMBL" id="CH471077">
    <property type="protein sequence ID" value="EAW76240.1"/>
    <property type="molecule type" value="Genomic_DNA"/>
</dbReference>
<dbReference type="EMBL" id="BC007927">
    <property type="protein sequence ID" value="AAH07927.1"/>
    <property type="molecule type" value="mRNA"/>
</dbReference>
<dbReference type="CCDS" id="CCDS13245.1">
    <molecule id="P48637-1"/>
</dbReference>
<dbReference type="PIR" id="S56748">
    <property type="entry name" value="S56748"/>
</dbReference>
<dbReference type="RefSeq" id="NP_000169.1">
    <molecule id="P48637-1"/>
    <property type="nucleotide sequence ID" value="NM_000178.4"/>
</dbReference>
<dbReference type="RefSeq" id="NP_001309423.1">
    <molecule id="P48637-1"/>
    <property type="nucleotide sequence ID" value="NM_001322494.1"/>
</dbReference>
<dbReference type="RefSeq" id="NP_001309424.1">
    <molecule id="P48637-1"/>
    <property type="nucleotide sequence ID" value="NM_001322495.1"/>
</dbReference>
<dbReference type="PDB" id="2HGS">
    <property type="method" value="X-ray"/>
    <property type="resolution" value="2.10 A"/>
    <property type="chains" value="A=1-474"/>
</dbReference>
<dbReference type="PDB" id="8FBZ">
    <property type="method" value="X-ray"/>
    <property type="resolution" value="1.59 A"/>
    <property type="chains" value="A/B=1-474"/>
</dbReference>
<dbReference type="PDBsum" id="2HGS"/>
<dbReference type="PDBsum" id="8FBZ"/>
<dbReference type="SMR" id="P48637"/>
<dbReference type="BioGRID" id="109192">
    <property type="interactions" value="37"/>
</dbReference>
<dbReference type="FunCoup" id="P48637">
    <property type="interactions" value="1365"/>
</dbReference>
<dbReference type="IntAct" id="P48637">
    <property type="interactions" value="12"/>
</dbReference>
<dbReference type="MINT" id="P48637"/>
<dbReference type="STRING" id="9606.ENSP00000495750"/>
<dbReference type="DrugBank" id="DB06151">
    <property type="generic name" value="Acetylcysteine"/>
</dbReference>
<dbReference type="DrugBank" id="DB09130">
    <property type="generic name" value="Copper"/>
</dbReference>
<dbReference type="DrugBank" id="DB00151">
    <property type="generic name" value="Cysteine"/>
</dbReference>
<dbReference type="DrugBank" id="DB03408">
    <property type="generic name" value="gamma-Glutamylcysteine"/>
</dbReference>
<dbReference type="DrugBank" id="DB00143">
    <property type="generic name" value="Glutathione"/>
</dbReference>
<dbReference type="DrugBank" id="DB00145">
    <property type="generic name" value="Glycine"/>
</dbReference>
<dbReference type="DrugBank" id="DB04395">
    <property type="generic name" value="Phosphoaminophosphonic Acid-Adenylate Ester"/>
</dbReference>
<dbReference type="DrugCentral" id="P48637"/>
<dbReference type="iPTMnet" id="P48637"/>
<dbReference type="PhosphoSitePlus" id="P48637"/>
<dbReference type="BioMuta" id="GSS"/>
<dbReference type="DMDM" id="1346191"/>
<dbReference type="OGP" id="P48637"/>
<dbReference type="REPRODUCTION-2DPAGE" id="IPI00010706"/>
<dbReference type="CPTAC" id="CPTAC-210"/>
<dbReference type="CPTAC" id="CPTAC-211"/>
<dbReference type="jPOST" id="P48637"/>
<dbReference type="MassIVE" id="P48637"/>
<dbReference type="PaxDb" id="9606-ENSP00000216951"/>
<dbReference type="PeptideAtlas" id="P48637"/>
<dbReference type="ProteomicsDB" id="55917">
    <molecule id="P48637-1"/>
</dbReference>
<dbReference type="ProteomicsDB" id="6247"/>
<dbReference type="Pumba" id="P48637"/>
<dbReference type="Antibodypedia" id="25920">
    <property type="antibodies" value="442 antibodies from 35 providers"/>
</dbReference>
<dbReference type="DNASU" id="2937"/>
<dbReference type="Ensembl" id="ENST00000451957.2">
    <molecule id="P48637-2"/>
    <property type="protein sequence ID" value="ENSP00000407517.2"/>
    <property type="gene ID" value="ENSG00000100983.12"/>
</dbReference>
<dbReference type="Ensembl" id="ENST00000643188.1">
    <molecule id="P48637-1"/>
    <property type="protein sequence ID" value="ENSP00000493903.1"/>
    <property type="gene ID" value="ENSG00000100983.12"/>
</dbReference>
<dbReference type="Ensembl" id="ENST00000644793.1">
    <molecule id="P48637-1"/>
    <property type="protein sequence ID" value="ENSP00000495750.1"/>
    <property type="gene ID" value="ENSG00000100983.12"/>
</dbReference>
<dbReference type="Ensembl" id="ENST00000646735.1">
    <molecule id="P48637-2"/>
    <property type="protein sequence ID" value="ENSP00000493763.1"/>
    <property type="gene ID" value="ENSG00000100983.12"/>
</dbReference>
<dbReference type="Ensembl" id="ENST00000651619.1">
    <molecule id="P48637-1"/>
    <property type="protein sequence ID" value="ENSP00000498303.1"/>
    <property type="gene ID" value="ENSG00000100983.12"/>
</dbReference>
<dbReference type="GeneID" id="2937"/>
<dbReference type="KEGG" id="hsa:2937"/>
<dbReference type="MANE-Select" id="ENST00000651619.1">
    <property type="protein sequence ID" value="ENSP00000498303.1"/>
    <property type="RefSeq nucleotide sequence ID" value="NM_000178.4"/>
    <property type="RefSeq protein sequence ID" value="NP_000169.1"/>
</dbReference>
<dbReference type="UCSC" id="uc010zuo.3">
    <molecule id="P48637-1"/>
    <property type="organism name" value="human"/>
</dbReference>
<dbReference type="AGR" id="HGNC:4624"/>
<dbReference type="CTD" id="2937"/>
<dbReference type="DisGeNET" id="2937"/>
<dbReference type="GeneCards" id="GSS"/>
<dbReference type="HGNC" id="HGNC:4624">
    <property type="gene designation" value="GSS"/>
</dbReference>
<dbReference type="HPA" id="ENSG00000100983">
    <property type="expression patterns" value="Low tissue specificity"/>
</dbReference>
<dbReference type="MalaCards" id="GSS"/>
<dbReference type="MIM" id="231900">
    <property type="type" value="phenotype"/>
</dbReference>
<dbReference type="MIM" id="266130">
    <property type="type" value="phenotype"/>
</dbReference>
<dbReference type="MIM" id="601002">
    <property type="type" value="gene"/>
</dbReference>
<dbReference type="neXtProt" id="NX_P48637"/>
<dbReference type="OpenTargets" id="ENSG00000100983"/>
<dbReference type="Orphanet" id="289846">
    <property type="disease" value="Glutathione synthetase deficiency with 5-oxoprolinuria"/>
</dbReference>
<dbReference type="Orphanet" id="289849">
    <property type="disease" value="Glutathione synthetase deficiency without 5-oxoprolinuria"/>
</dbReference>
<dbReference type="PharmGKB" id="PA29015"/>
<dbReference type="VEuPathDB" id="HostDB:ENSG00000100983"/>
<dbReference type="eggNOG" id="KOG0021">
    <property type="taxonomic scope" value="Eukaryota"/>
</dbReference>
<dbReference type="GeneTree" id="ENSGT00390000013764"/>
<dbReference type="HOGENOM" id="CLU_025152_2_1_1"/>
<dbReference type="InParanoid" id="P48637"/>
<dbReference type="OMA" id="NGLVMYP"/>
<dbReference type="OrthoDB" id="2020073at2759"/>
<dbReference type="PAN-GO" id="P48637">
    <property type="GO annotations" value="3 GO annotations based on evolutionary models"/>
</dbReference>
<dbReference type="PhylomeDB" id="P48637"/>
<dbReference type="TreeFam" id="TF105187"/>
<dbReference type="BioCyc" id="MetaCyc:HS02174-MONOMER"/>
<dbReference type="BRENDA" id="6.3.2.3">
    <property type="organism ID" value="2681"/>
</dbReference>
<dbReference type="PathwayCommons" id="P48637"/>
<dbReference type="Reactome" id="R-HSA-174403">
    <property type="pathway name" value="Glutathione synthesis and recycling"/>
</dbReference>
<dbReference type="Reactome" id="R-HSA-5579006">
    <property type="pathway name" value="Defective GSS causes GSS deficiency"/>
</dbReference>
<dbReference type="SABIO-RK" id="P48637"/>
<dbReference type="SignaLink" id="P48637"/>
<dbReference type="UniPathway" id="UPA00142">
    <property type="reaction ID" value="UER00210"/>
</dbReference>
<dbReference type="BioGRID-ORCS" id="2937">
    <property type="hits" value="41 hits in 1177 CRISPR screens"/>
</dbReference>
<dbReference type="ChiTaRS" id="GSS">
    <property type="organism name" value="human"/>
</dbReference>
<dbReference type="EvolutionaryTrace" id="P48637"/>
<dbReference type="GenomeRNAi" id="2937"/>
<dbReference type="Pharos" id="P48637">
    <property type="development level" value="Tbio"/>
</dbReference>
<dbReference type="PRO" id="PR:P48637"/>
<dbReference type="Proteomes" id="UP000005640">
    <property type="component" value="Chromosome 20"/>
</dbReference>
<dbReference type="RNAct" id="P48637">
    <property type="molecule type" value="protein"/>
</dbReference>
<dbReference type="Bgee" id="ENSG00000100983">
    <property type="expression patterns" value="Expressed in frontal pole and 206 other cell types or tissues"/>
</dbReference>
<dbReference type="ExpressionAtlas" id="P48637">
    <property type="expression patterns" value="baseline and differential"/>
</dbReference>
<dbReference type="GO" id="GO:0005829">
    <property type="term" value="C:cytosol"/>
    <property type="evidence" value="ECO:0000318"/>
    <property type="project" value="GO_Central"/>
</dbReference>
<dbReference type="GO" id="GO:0070062">
    <property type="term" value="C:extracellular exosome"/>
    <property type="evidence" value="ECO:0007005"/>
    <property type="project" value="UniProtKB"/>
</dbReference>
<dbReference type="GO" id="GO:0005524">
    <property type="term" value="F:ATP binding"/>
    <property type="evidence" value="ECO:0000314"/>
    <property type="project" value="UniProtKB"/>
</dbReference>
<dbReference type="GO" id="GO:0043295">
    <property type="term" value="F:glutathione binding"/>
    <property type="evidence" value="ECO:0000314"/>
    <property type="project" value="UniProtKB"/>
</dbReference>
<dbReference type="GO" id="GO:0004363">
    <property type="term" value="F:glutathione synthase activity"/>
    <property type="evidence" value="ECO:0000318"/>
    <property type="project" value="GO_Central"/>
</dbReference>
<dbReference type="GO" id="GO:0042802">
    <property type="term" value="F:identical protein binding"/>
    <property type="evidence" value="ECO:0000353"/>
    <property type="project" value="IntAct"/>
</dbReference>
<dbReference type="GO" id="GO:0000287">
    <property type="term" value="F:magnesium ion binding"/>
    <property type="evidence" value="ECO:0000314"/>
    <property type="project" value="UniProtKB"/>
</dbReference>
<dbReference type="GO" id="GO:0042803">
    <property type="term" value="F:protein homodimerization activity"/>
    <property type="evidence" value="ECO:0000314"/>
    <property type="project" value="UniProtKB"/>
</dbReference>
<dbReference type="GO" id="GO:0006520">
    <property type="term" value="P:amino acid metabolic process"/>
    <property type="evidence" value="ECO:0000304"/>
    <property type="project" value="ProtInc"/>
</dbReference>
<dbReference type="GO" id="GO:0007399">
    <property type="term" value="P:nervous system development"/>
    <property type="evidence" value="ECO:0000304"/>
    <property type="project" value="ProtInc"/>
</dbReference>
<dbReference type="GO" id="GO:0046686">
    <property type="term" value="P:response to cadmium ion"/>
    <property type="evidence" value="ECO:0007669"/>
    <property type="project" value="Ensembl"/>
</dbReference>
<dbReference type="GO" id="GO:0006979">
    <property type="term" value="P:response to oxidative stress"/>
    <property type="evidence" value="ECO:0000304"/>
    <property type="project" value="ProtInc"/>
</dbReference>
<dbReference type="CDD" id="cd00228">
    <property type="entry name" value="eu-GS"/>
    <property type="match status" value="1"/>
</dbReference>
<dbReference type="FunFam" id="3.30.1490.50:FF:000001">
    <property type="entry name" value="Glutathione synthetase"/>
    <property type="match status" value="1"/>
</dbReference>
<dbReference type="FunFam" id="3.30.1490.80:FF:000004">
    <property type="entry name" value="Glutathione synthetase"/>
    <property type="match status" value="1"/>
</dbReference>
<dbReference type="FunFam" id="3.40.50.1760:FF:000003">
    <property type="entry name" value="Glutathione synthetase"/>
    <property type="match status" value="1"/>
</dbReference>
<dbReference type="Gene3D" id="3.30.1490.50">
    <property type="match status" value="1"/>
</dbReference>
<dbReference type="Gene3D" id="3.30.1490.80">
    <property type="match status" value="1"/>
</dbReference>
<dbReference type="Gene3D" id="3.30.470.20">
    <property type="entry name" value="ATP-grasp fold, B domain"/>
    <property type="match status" value="1"/>
</dbReference>
<dbReference type="Gene3D" id="3.40.50.1760">
    <property type="entry name" value="Glutathione synthase, substrate-binding domain superfamily, eukaryotic"/>
    <property type="match status" value="1"/>
</dbReference>
<dbReference type="Gene3D" id="1.10.1080.10">
    <property type="entry name" value="Glutathione Synthetase, Chain A, domain 3"/>
    <property type="match status" value="1"/>
</dbReference>
<dbReference type="InterPro" id="IPR005615">
    <property type="entry name" value="Glutathione_synthase"/>
</dbReference>
<dbReference type="InterPro" id="IPR014042">
    <property type="entry name" value="Glutathione_synthase_a-hlx"/>
</dbReference>
<dbReference type="InterPro" id="IPR014709">
    <property type="entry name" value="Glutathione_synthase_C_euk"/>
</dbReference>
<dbReference type="InterPro" id="IPR014049">
    <property type="entry name" value="Glutathione_synthase_N_euk"/>
</dbReference>
<dbReference type="InterPro" id="IPR037013">
    <property type="entry name" value="GSH-S_sub-bd_sf"/>
</dbReference>
<dbReference type="InterPro" id="IPR004887">
    <property type="entry name" value="GSH_synth_subst-bd"/>
</dbReference>
<dbReference type="InterPro" id="IPR016185">
    <property type="entry name" value="PreATP-grasp_dom_sf"/>
</dbReference>
<dbReference type="NCBIfam" id="TIGR01986">
    <property type="entry name" value="glut_syn_euk"/>
    <property type="match status" value="1"/>
</dbReference>
<dbReference type="PANTHER" id="PTHR11130">
    <property type="entry name" value="GLUTATHIONE SYNTHETASE"/>
    <property type="match status" value="1"/>
</dbReference>
<dbReference type="PANTHER" id="PTHR11130:SF0">
    <property type="entry name" value="GLUTATHIONE SYNTHETASE"/>
    <property type="match status" value="1"/>
</dbReference>
<dbReference type="Pfam" id="PF03917">
    <property type="entry name" value="GSH_synth_ATP"/>
    <property type="match status" value="1"/>
</dbReference>
<dbReference type="Pfam" id="PF03199">
    <property type="entry name" value="GSH_synthase"/>
    <property type="match status" value="1"/>
</dbReference>
<dbReference type="PIRSF" id="PIRSF001558">
    <property type="entry name" value="GSHase"/>
    <property type="match status" value="1"/>
</dbReference>
<dbReference type="SUPFAM" id="SSF56059">
    <property type="entry name" value="Glutathione synthetase ATP-binding domain-like"/>
    <property type="match status" value="1"/>
</dbReference>
<dbReference type="SUPFAM" id="SSF52440">
    <property type="entry name" value="PreATP-grasp domain"/>
    <property type="match status" value="1"/>
</dbReference>
<sequence length="474" mass="52385">MATNWGSLLQDKQQLEELARQAVDRALAEGVLLRTSQEPTSSEVVSYAPFTLFPSLVPSALLEQAYAVQMDFNLLVDAVSQNAAFLEQTLSSTIKQDDFTARLFDIHKQVLKEGIAQTVFLGLNRSDYMFQRSADGSPALKQIEINTISASFGGLASRTPAVHRHVLSVLSKTKEAGKILSNNPSKGLALGIAKAWELYGSPNALVLLIAQEKERNIFDQRAIENELLARNIHVIRRTFEDISEKGSLDQDRRLFVDGQEIAVVYFRDGYMPRQYSLQNWEARLLLERSHAAKCPDIATQLAGTKKVQQELSRPGMLEMLLPGQPEAVARLRATFAGLYSLDVGEEGDQAIAEALAAPSRFVLKPQREGGGNNLYGEEMVQALKQLKDSEERASYILMEKIEPEPFENCLLRPGSPARVVQCISELGIFGVYVRQEKTLVMNKHVGHLLRTKAIEHADGGVAAGVAVLDNPYPV</sequence>
<protein>
    <recommendedName>
        <fullName evidence="11">Glutathione synthetase</fullName>
        <shortName>GSH synthetase</shortName>
        <shortName>GSH-S</shortName>
        <ecNumber evidence="5 7">6.3.2.3</ecNumber>
    </recommendedName>
    <alternativeName>
        <fullName>Glutathione synthase</fullName>
    </alternativeName>
</protein>
<comment type="function">
    <text evidence="1 5 7 9">Catalyzes the production of glutathione from gamma-glutamylcysteine and glycine in an ATP-dependent manner (PubMed:7646467, PubMed:9215686). Glutathione (gamma-glutamylcysteinylglycine, GSH) is the most abundant intracellular thiol in living aerobic cells and is required for numerous processes including the protection of cells against oxidative damage, amino acid transport, the detoxification of foreign compounds, the maintenance of protein sulfhydryl groups in a reduced state and acts as a cofactor for a number of enzymes (PubMed:10369661). Participates in ophthalmate biosynthesis in hepatocytes (By similarity).</text>
</comment>
<comment type="catalytic activity">
    <reaction evidence="5 7">
        <text>gamma-L-glutamyl-L-cysteine + glycine + ATP = glutathione + ADP + phosphate + H(+)</text>
        <dbReference type="Rhea" id="RHEA:13557"/>
        <dbReference type="ChEBI" id="CHEBI:15378"/>
        <dbReference type="ChEBI" id="CHEBI:30616"/>
        <dbReference type="ChEBI" id="CHEBI:43474"/>
        <dbReference type="ChEBI" id="CHEBI:57305"/>
        <dbReference type="ChEBI" id="CHEBI:57925"/>
        <dbReference type="ChEBI" id="CHEBI:58173"/>
        <dbReference type="ChEBI" id="CHEBI:456216"/>
        <dbReference type="EC" id="6.3.2.3"/>
    </reaction>
    <physiologicalReaction direction="left-to-right" evidence="7">
        <dbReference type="Rhea" id="RHEA:13558"/>
    </physiologicalReaction>
</comment>
<comment type="catalytic activity">
    <reaction evidence="1">
        <text>gamma-L-glutamyl-(2S)-2-aminobutanoate + glycine + ATP = ophthalmate + ADP + phosphate + H(+)</text>
        <dbReference type="Rhea" id="RHEA:72075"/>
        <dbReference type="ChEBI" id="CHEBI:15378"/>
        <dbReference type="ChEBI" id="CHEBI:30616"/>
        <dbReference type="ChEBI" id="CHEBI:43474"/>
        <dbReference type="ChEBI" id="CHEBI:57305"/>
        <dbReference type="ChEBI" id="CHEBI:189406"/>
        <dbReference type="ChEBI" id="CHEBI:189750"/>
        <dbReference type="ChEBI" id="CHEBI:456216"/>
    </reaction>
    <physiologicalReaction direction="left-to-right" evidence="1">
        <dbReference type="Rhea" id="RHEA:72076"/>
    </physiologicalReaction>
</comment>
<comment type="cofactor">
    <cofactor evidence="2">
        <name>Mg(2+)</name>
        <dbReference type="ChEBI" id="CHEBI:18420"/>
    </cofactor>
    <text evidence="2">Binds 1 Mg(2+) ion per subunit.</text>
</comment>
<comment type="pathway">
    <text evidence="13">Sulfur metabolism; glutathione biosynthesis; glutathione from L-cysteine and L-glutamate: step 2/2.</text>
</comment>
<comment type="subunit">
    <text evidence="2 5">Homodimer.</text>
</comment>
<comment type="interaction">
    <interactant intactId="EBI-2969145">
        <id>P48637</id>
    </interactant>
    <interactant intactId="EBI-2969145">
        <id>P48637</id>
        <label>GSS</label>
    </interactant>
    <organismsDiffer>false</organismsDiffer>
    <experiments>8</experiments>
</comment>
<comment type="interaction">
    <interactant intactId="EBI-2969145">
        <id>P48637</id>
    </interactant>
    <interactant intactId="EBI-710997">
        <id>P54274</id>
        <label>TERF1</label>
    </interactant>
    <organismsDiffer>false</organismsDiffer>
    <experiments>2</experiments>
</comment>
<comment type="alternative products">
    <event type="alternative splicing"/>
    <isoform>
        <id>P48637-1</id>
        <name>1</name>
        <sequence type="displayed"/>
    </isoform>
    <isoform>
        <id>P48637-2</id>
        <name>2</name>
        <sequence type="described" ref="VSP_047617"/>
    </isoform>
</comment>
<comment type="disease" evidence="4 6 7">
    <disease id="DI-01673">
        <name>Glutathione synthetase deficiency</name>
        <acronym>GSSD</acronym>
        <description>An autosomal recessive disorder characterized by massive urinary excretion of 5-oxoproline, metabolic acidosis, hemolytic anemia, and central nervous system damage.</description>
        <dbReference type="MIM" id="266130"/>
    </disease>
    <text>The disease is caused by variants affecting the gene represented in this entry.</text>
</comment>
<comment type="disease" evidence="4 6 7">
    <disease id="DI-01674">
        <name>Anemia, congenital, non-spherocytic hemolytic, 6</name>
        <acronym>CNSHA6</acronym>
        <description>A mild form of glutathione synthetase deficiency, resulting in hemolytic anemia. Affected individuals do not have neurologic abnormalities. CNSHA6 inheritance is autosomal recessive.</description>
        <dbReference type="MIM" id="231900"/>
    </disease>
    <text>The disease is caused by variants affecting the gene represented in this entry.</text>
</comment>
<comment type="miscellaneous">
    <molecule>Isoform 2</molecule>
    <text evidence="12">Detected in colon, kidney, lung, liver, placenta, peripheral blood and uterus, but not in heart, skeletal muscle and spleen.</text>
</comment>
<comment type="similarity">
    <text evidence="12">Belongs to the eukaryotic GSH synthase family.</text>
</comment>
<accession>P48637</accession>
<accession>B2R697</accession>
<accession>B6F210</accession>
<accession>E1P5P9</accession>
<accession>Q4TTD9</accession>
<name>GSHB_HUMAN</name>
<evidence type="ECO:0000250" key="1">
    <source>
        <dbReference type="UniProtKB" id="P51855"/>
    </source>
</evidence>
<evidence type="ECO:0000269" key="2">
    <source>
    </source>
</evidence>
<evidence type="ECO:0000269" key="3">
    <source>
    </source>
</evidence>
<evidence type="ECO:0000269" key="4">
    <source>
    </source>
</evidence>
<evidence type="ECO:0000269" key="5">
    <source>
    </source>
</evidence>
<evidence type="ECO:0000269" key="6">
    <source>
    </source>
</evidence>
<evidence type="ECO:0000269" key="7">
    <source>
    </source>
</evidence>
<evidence type="ECO:0000269" key="8">
    <source ref="5"/>
</evidence>
<evidence type="ECO:0000303" key="9">
    <source>
    </source>
</evidence>
<evidence type="ECO:0000303" key="10">
    <source>
    </source>
</evidence>
<evidence type="ECO:0000303" key="11">
    <source>
    </source>
</evidence>
<evidence type="ECO:0000305" key="12"/>
<evidence type="ECO:0000305" key="13">
    <source>
    </source>
</evidence>
<evidence type="ECO:0000312" key="14">
    <source>
        <dbReference type="HGNC" id="HGNC:4624"/>
    </source>
</evidence>
<evidence type="ECO:0007744" key="15">
    <source>
    </source>
</evidence>
<evidence type="ECO:0007744" key="16">
    <source>
    </source>
</evidence>
<evidence type="ECO:0007744" key="17">
    <source>
    </source>
</evidence>
<evidence type="ECO:0007744" key="18">
    <source>
    </source>
</evidence>
<evidence type="ECO:0007829" key="19">
    <source>
        <dbReference type="PDB" id="2HGS"/>
    </source>
</evidence>
<keyword id="KW-0002">3D-structure</keyword>
<keyword id="KW-0007">Acetylation</keyword>
<keyword id="KW-0025">Alternative splicing</keyword>
<keyword id="KW-0067">ATP-binding</keyword>
<keyword id="KW-0903">Direct protein sequencing</keyword>
<keyword id="KW-0225">Disease variant</keyword>
<keyword id="KW-0317">Glutathione biosynthesis</keyword>
<keyword id="KW-0360">Hereditary hemolytic anemia</keyword>
<keyword id="KW-0436">Ligase</keyword>
<keyword id="KW-0460">Magnesium</keyword>
<keyword id="KW-0479">Metal-binding</keyword>
<keyword id="KW-0547">Nucleotide-binding</keyword>
<keyword id="KW-0597">Phosphoprotein</keyword>
<keyword id="KW-1267">Proteomics identification</keyword>
<keyword id="KW-1185">Reference proteome</keyword>
<gene>
    <name evidence="14" type="primary">GSS</name>
</gene>
<reference key="1">
    <citation type="journal article" date="1995" name="Biochem. J.">
        <title>Sequencing and expression of a cDNA for human glutathione synthetase.</title>
        <authorList>
            <person name="Gali R.R."/>
            <person name="Board P.G."/>
        </authorList>
    </citation>
    <scope>NUCLEOTIDE SEQUENCE [MRNA] (ISOFORM 1)</scope>
    <scope>FUNCTION</scope>
    <scope>CATALYTIC ACTIVITY</scope>
    <scope>SUBUNIT</scope>
    <source>
        <tissue>Brain</tissue>
    </source>
</reference>
<reference key="2">
    <citation type="journal article" date="2010" name="Mol. Biol. Rep.">
        <title>Alternative RNA splicing in expression of the glutathione synthetase gene in human cells.</title>
        <authorList>
            <person name="Uchida M."/>
            <person name="Sugaya M."/>
            <person name="Kanamaru T."/>
            <person name="Hisatomi H."/>
        </authorList>
    </citation>
    <scope>NUCLEOTIDE SEQUENCE [MRNA] (ISOFORM 2)</scope>
</reference>
<reference key="3">
    <citation type="submission" date="1995-08" db="EMBL/GenBank/DDBJ databases">
        <authorList>
            <person name="Shi Z.-Z."/>
            <person name="Galang R.L."/>
            <person name="Habib G.M."/>
            <person name="Lebovitz R.M."/>
            <person name="Lieberman M.W."/>
        </authorList>
    </citation>
    <scope>NUCLEOTIDE SEQUENCE [MRNA] (ISOFORM 1)</scope>
    <source>
        <tissue>Kidney</tissue>
    </source>
</reference>
<reference key="4">
    <citation type="journal article" date="2004" name="Nat. Genet.">
        <title>Complete sequencing and characterization of 21,243 full-length human cDNAs.</title>
        <authorList>
            <person name="Ota T."/>
            <person name="Suzuki Y."/>
            <person name="Nishikawa T."/>
            <person name="Otsuki T."/>
            <person name="Sugiyama T."/>
            <person name="Irie R."/>
            <person name="Wakamatsu A."/>
            <person name="Hayashi K."/>
            <person name="Sato H."/>
            <person name="Nagai K."/>
            <person name="Kimura K."/>
            <person name="Makita H."/>
            <person name="Sekine M."/>
            <person name="Obayashi M."/>
            <person name="Nishi T."/>
            <person name="Shibahara T."/>
            <person name="Tanaka T."/>
            <person name="Ishii S."/>
            <person name="Yamamoto J."/>
            <person name="Saito K."/>
            <person name="Kawai Y."/>
            <person name="Isono Y."/>
            <person name="Nakamura Y."/>
            <person name="Nagahari K."/>
            <person name="Murakami K."/>
            <person name="Yasuda T."/>
            <person name="Iwayanagi T."/>
            <person name="Wagatsuma M."/>
            <person name="Shiratori A."/>
            <person name="Sudo H."/>
            <person name="Hosoiri T."/>
            <person name="Kaku Y."/>
            <person name="Kodaira H."/>
            <person name="Kondo H."/>
            <person name="Sugawara M."/>
            <person name="Takahashi M."/>
            <person name="Kanda K."/>
            <person name="Yokoi T."/>
            <person name="Furuya T."/>
            <person name="Kikkawa E."/>
            <person name="Omura Y."/>
            <person name="Abe K."/>
            <person name="Kamihara K."/>
            <person name="Katsuta N."/>
            <person name="Sato K."/>
            <person name="Tanikawa M."/>
            <person name="Yamazaki M."/>
            <person name="Ninomiya K."/>
            <person name="Ishibashi T."/>
            <person name="Yamashita H."/>
            <person name="Murakawa K."/>
            <person name="Fujimori K."/>
            <person name="Tanai H."/>
            <person name="Kimata M."/>
            <person name="Watanabe M."/>
            <person name="Hiraoka S."/>
            <person name="Chiba Y."/>
            <person name="Ishida S."/>
            <person name="Ono Y."/>
            <person name="Takiguchi S."/>
            <person name="Watanabe S."/>
            <person name="Yosida M."/>
            <person name="Hotuta T."/>
            <person name="Kusano J."/>
            <person name="Kanehori K."/>
            <person name="Takahashi-Fujii A."/>
            <person name="Hara H."/>
            <person name="Tanase T.-O."/>
            <person name="Nomura Y."/>
            <person name="Togiya S."/>
            <person name="Komai F."/>
            <person name="Hara R."/>
            <person name="Takeuchi K."/>
            <person name="Arita M."/>
            <person name="Imose N."/>
            <person name="Musashino K."/>
            <person name="Yuuki H."/>
            <person name="Oshima A."/>
            <person name="Sasaki N."/>
            <person name="Aotsuka S."/>
            <person name="Yoshikawa Y."/>
            <person name="Matsunawa H."/>
            <person name="Ichihara T."/>
            <person name="Shiohata N."/>
            <person name="Sano S."/>
            <person name="Moriya S."/>
            <person name="Momiyama H."/>
            <person name="Satoh N."/>
            <person name="Takami S."/>
            <person name="Terashima Y."/>
            <person name="Suzuki O."/>
            <person name="Nakagawa S."/>
            <person name="Senoh A."/>
            <person name="Mizoguchi H."/>
            <person name="Goto Y."/>
            <person name="Shimizu F."/>
            <person name="Wakebe H."/>
            <person name="Hishigaki H."/>
            <person name="Watanabe T."/>
            <person name="Sugiyama A."/>
            <person name="Takemoto M."/>
            <person name="Kawakami B."/>
            <person name="Yamazaki M."/>
            <person name="Watanabe K."/>
            <person name="Kumagai A."/>
            <person name="Itakura S."/>
            <person name="Fukuzumi Y."/>
            <person name="Fujimori Y."/>
            <person name="Komiyama M."/>
            <person name="Tashiro H."/>
            <person name="Tanigami A."/>
            <person name="Fujiwara T."/>
            <person name="Ono T."/>
            <person name="Yamada K."/>
            <person name="Fujii Y."/>
            <person name="Ozaki K."/>
            <person name="Hirao M."/>
            <person name="Ohmori Y."/>
            <person name="Kawabata A."/>
            <person name="Hikiji T."/>
            <person name="Kobatake N."/>
            <person name="Inagaki H."/>
            <person name="Ikema Y."/>
            <person name="Okamoto S."/>
            <person name="Okitani R."/>
            <person name="Kawakami T."/>
            <person name="Noguchi S."/>
            <person name="Itoh T."/>
            <person name="Shigeta K."/>
            <person name="Senba T."/>
            <person name="Matsumura K."/>
            <person name="Nakajima Y."/>
            <person name="Mizuno T."/>
            <person name="Morinaga M."/>
            <person name="Sasaki M."/>
            <person name="Togashi T."/>
            <person name="Oyama M."/>
            <person name="Hata H."/>
            <person name="Watanabe M."/>
            <person name="Komatsu T."/>
            <person name="Mizushima-Sugano J."/>
            <person name="Satoh T."/>
            <person name="Shirai Y."/>
            <person name="Takahashi Y."/>
            <person name="Nakagawa K."/>
            <person name="Okumura K."/>
            <person name="Nagase T."/>
            <person name="Nomura N."/>
            <person name="Kikuchi H."/>
            <person name="Masuho Y."/>
            <person name="Yamashita R."/>
            <person name="Nakai K."/>
            <person name="Yada T."/>
            <person name="Nakamura Y."/>
            <person name="Ohara O."/>
            <person name="Isogai T."/>
            <person name="Sugano S."/>
        </authorList>
    </citation>
    <scope>NUCLEOTIDE SEQUENCE [LARGE SCALE MRNA] (ISOFORM 1)</scope>
    <scope>VARIANT GLU-437</scope>
    <source>
        <tissue>Substantia nigra</tissue>
    </source>
</reference>
<reference key="5">
    <citation type="submission" date="2005-05" db="EMBL/GenBank/DDBJ databases">
        <authorList>
            <consortium name="NIEHS SNPs program"/>
        </authorList>
    </citation>
    <scope>NUCLEOTIDE SEQUENCE [GENOMIC DNA]</scope>
    <scope>VARIANTS GLN-236 AND GLU-437</scope>
</reference>
<reference key="6">
    <citation type="journal article" date="2001" name="Nature">
        <title>The DNA sequence and comparative analysis of human chromosome 20.</title>
        <authorList>
            <person name="Deloukas P."/>
            <person name="Matthews L.H."/>
            <person name="Ashurst J.L."/>
            <person name="Burton J."/>
            <person name="Gilbert J.G.R."/>
            <person name="Jones M."/>
            <person name="Stavrides G."/>
            <person name="Almeida J.P."/>
            <person name="Babbage A.K."/>
            <person name="Bagguley C.L."/>
            <person name="Bailey J."/>
            <person name="Barlow K.F."/>
            <person name="Bates K.N."/>
            <person name="Beard L.M."/>
            <person name="Beare D.M."/>
            <person name="Beasley O.P."/>
            <person name="Bird C.P."/>
            <person name="Blakey S.E."/>
            <person name="Bridgeman A.M."/>
            <person name="Brown A.J."/>
            <person name="Buck D."/>
            <person name="Burrill W.D."/>
            <person name="Butler A.P."/>
            <person name="Carder C."/>
            <person name="Carter N.P."/>
            <person name="Chapman J.C."/>
            <person name="Clamp M."/>
            <person name="Clark G."/>
            <person name="Clark L.N."/>
            <person name="Clark S.Y."/>
            <person name="Clee C.M."/>
            <person name="Clegg S."/>
            <person name="Cobley V.E."/>
            <person name="Collier R.E."/>
            <person name="Connor R.E."/>
            <person name="Corby N.R."/>
            <person name="Coulson A."/>
            <person name="Coville G.J."/>
            <person name="Deadman R."/>
            <person name="Dhami P.D."/>
            <person name="Dunn M."/>
            <person name="Ellington A.G."/>
            <person name="Frankland J.A."/>
            <person name="Fraser A."/>
            <person name="French L."/>
            <person name="Garner P."/>
            <person name="Grafham D.V."/>
            <person name="Griffiths C."/>
            <person name="Griffiths M.N.D."/>
            <person name="Gwilliam R."/>
            <person name="Hall R.E."/>
            <person name="Hammond S."/>
            <person name="Harley J.L."/>
            <person name="Heath P.D."/>
            <person name="Ho S."/>
            <person name="Holden J.L."/>
            <person name="Howden P.J."/>
            <person name="Huckle E."/>
            <person name="Hunt A.R."/>
            <person name="Hunt S.E."/>
            <person name="Jekosch K."/>
            <person name="Johnson C.M."/>
            <person name="Johnson D."/>
            <person name="Kay M.P."/>
            <person name="Kimberley A.M."/>
            <person name="King A."/>
            <person name="Knights A."/>
            <person name="Laird G.K."/>
            <person name="Lawlor S."/>
            <person name="Lehvaeslaiho M.H."/>
            <person name="Leversha M.A."/>
            <person name="Lloyd C."/>
            <person name="Lloyd D.M."/>
            <person name="Lovell J.D."/>
            <person name="Marsh V.L."/>
            <person name="Martin S.L."/>
            <person name="McConnachie L.J."/>
            <person name="McLay K."/>
            <person name="McMurray A.A."/>
            <person name="Milne S.A."/>
            <person name="Mistry D."/>
            <person name="Moore M.J.F."/>
            <person name="Mullikin J.C."/>
            <person name="Nickerson T."/>
            <person name="Oliver K."/>
            <person name="Parker A."/>
            <person name="Patel R."/>
            <person name="Pearce T.A.V."/>
            <person name="Peck A.I."/>
            <person name="Phillimore B.J.C.T."/>
            <person name="Prathalingam S.R."/>
            <person name="Plumb R.W."/>
            <person name="Ramsay H."/>
            <person name="Rice C.M."/>
            <person name="Ross M.T."/>
            <person name="Scott C.E."/>
            <person name="Sehra H.K."/>
            <person name="Shownkeen R."/>
            <person name="Sims S."/>
            <person name="Skuce C.D."/>
            <person name="Smith M.L."/>
            <person name="Soderlund C."/>
            <person name="Steward C.A."/>
            <person name="Sulston J.E."/>
            <person name="Swann R.M."/>
            <person name="Sycamore N."/>
            <person name="Taylor R."/>
            <person name="Tee L."/>
            <person name="Thomas D.W."/>
            <person name="Thorpe A."/>
            <person name="Tracey A."/>
            <person name="Tromans A.C."/>
            <person name="Vaudin M."/>
            <person name="Wall M."/>
            <person name="Wallis J.M."/>
            <person name="Whitehead S.L."/>
            <person name="Whittaker P."/>
            <person name="Willey D.L."/>
            <person name="Williams L."/>
            <person name="Williams S.A."/>
            <person name="Wilming L."/>
            <person name="Wray P.W."/>
            <person name="Hubbard T."/>
            <person name="Durbin R.M."/>
            <person name="Bentley D.R."/>
            <person name="Beck S."/>
            <person name="Rogers J."/>
        </authorList>
    </citation>
    <scope>NUCLEOTIDE SEQUENCE [LARGE SCALE GENOMIC DNA]</scope>
</reference>
<reference key="7">
    <citation type="submission" date="2005-09" db="EMBL/GenBank/DDBJ databases">
        <authorList>
            <person name="Mural R.J."/>
            <person name="Istrail S."/>
            <person name="Sutton G.G."/>
            <person name="Florea L."/>
            <person name="Halpern A.L."/>
            <person name="Mobarry C.M."/>
            <person name="Lippert R."/>
            <person name="Walenz B."/>
            <person name="Shatkay H."/>
            <person name="Dew I."/>
            <person name="Miller J.R."/>
            <person name="Flanigan M.J."/>
            <person name="Edwards N.J."/>
            <person name="Bolanos R."/>
            <person name="Fasulo D."/>
            <person name="Halldorsson B.V."/>
            <person name="Hannenhalli S."/>
            <person name="Turner R."/>
            <person name="Yooseph S."/>
            <person name="Lu F."/>
            <person name="Nusskern D.R."/>
            <person name="Shue B.C."/>
            <person name="Zheng X.H."/>
            <person name="Zhong F."/>
            <person name="Delcher A.L."/>
            <person name="Huson D.H."/>
            <person name="Kravitz S.A."/>
            <person name="Mouchard L."/>
            <person name="Reinert K."/>
            <person name="Remington K.A."/>
            <person name="Clark A.G."/>
            <person name="Waterman M.S."/>
            <person name="Eichler E.E."/>
            <person name="Adams M.D."/>
            <person name="Hunkapiller M.W."/>
            <person name="Myers E.W."/>
            <person name="Venter J.C."/>
        </authorList>
    </citation>
    <scope>NUCLEOTIDE SEQUENCE [LARGE SCALE GENOMIC DNA]</scope>
</reference>
<reference key="8">
    <citation type="journal article" date="2004" name="Genome Res.">
        <title>The status, quality, and expansion of the NIH full-length cDNA project: the Mammalian Gene Collection (MGC).</title>
        <authorList>
            <consortium name="The MGC Project Team"/>
        </authorList>
    </citation>
    <scope>NUCLEOTIDE SEQUENCE [LARGE SCALE MRNA] (ISOFORM 1)</scope>
    <source>
        <tissue>Lung</tissue>
    </source>
</reference>
<reference key="9">
    <citation type="submission" date="2008-12" db="UniProtKB">
        <authorList>
            <person name="Lubec G."/>
            <person name="Chen W.-Q."/>
            <person name="Sun Y."/>
        </authorList>
    </citation>
    <scope>PROTEIN SEQUENCE OF 26-34; 113-125; 142-158; 222-230; 254-267; 274-283; 294-305; 419-434 AND 453-474</scope>
    <scope>IDENTIFICATION BY MASS SPECTROMETRY</scope>
    <source>
        <tissue>Fetal brain cortex</tissue>
    </source>
</reference>
<reference key="10">
    <citation type="journal article" date="2009" name="Anal. Chem.">
        <title>Lys-N and trypsin cover complementary parts of the phosphoproteome in a refined SCX-based approach.</title>
        <authorList>
            <person name="Gauci S."/>
            <person name="Helbig A.O."/>
            <person name="Slijper M."/>
            <person name="Krijgsveld J."/>
            <person name="Heck A.J."/>
            <person name="Mohammed S."/>
        </authorList>
    </citation>
    <scope>ACETYLATION [LARGE SCALE ANALYSIS] AT ALA-2</scope>
    <scope>CLEAVAGE OF INITIATOR METHIONINE [LARGE SCALE ANALYSIS]</scope>
    <scope>IDENTIFICATION BY MASS SPECTROMETRY [LARGE SCALE ANALYSIS]</scope>
</reference>
<reference key="11">
    <citation type="journal article" date="2011" name="BMC Syst. Biol.">
        <title>Initial characterization of the human central proteome.</title>
        <authorList>
            <person name="Burkard T.R."/>
            <person name="Planyavsky M."/>
            <person name="Kaupe I."/>
            <person name="Breitwieser F.P."/>
            <person name="Buerckstuemmer T."/>
            <person name="Bennett K.L."/>
            <person name="Superti-Furga G."/>
            <person name="Colinge J."/>
        </authorList>
    </citation>
    <scope>IDENTIFICATION BY MASS SPECTROMETRY [LARGE SCALE ANALYSIS]</scope>
</reference>
<reference key="12">
    <citation type="journal article" date="2012" name="Mol. Cell. Proteomics">
        <title>Comparative large-scale characterisation of plant vs. mammal proteins reveals similar and idiosyncratic N-alpha acetylation features.</title>
        <authorList>
            <person name="Bienvenut W.V."/>
            <person name="Sumpton D."/>
            <person name="Martinez A."/>
            <person name="Lilla S."/>
            <person name="Espagne C."/>
            <person name="Meinnel T."/>
            <person name="Giglione C."/>
        </authorList>
    </citation>
    <scope>ACETYLATION [LARGE SCALE ANALYSIS] AT ALA-2</scope>
    <scope>CLEAVAGE OF INITIATOR METHIONINE [LARGE SCALE ANALYSIS]</scope>
    <scope>IDENTIFICATION BY MASS SPECTROMETRY [LARGE SCALE ANALYSIS]</scope>
</reference>
<reference key="13">
    <citation type="journal article" date="2013" name="J. Proteome Res.">
        <title>Toward a comprehensive characterization of a human cancer cell phosphoproteome.</title>
        <authorList>
            <person name="Zhou H."/>
            <person name="Di Palma S."/>
            <person name="Preisinger C."/>
            <person name="Peng M."/>
            <person name="Polat A.N."/>
            <person name="Heck A.J."/>
            <person name="Mohammed S."/>
        </authorList>
    </citation>
    <scope>PHOSPHORYLATION [LARGE SCALE ANALYSIS] AT SER-415</scope>
    <scope>IDENTIFICATION BY MASS SPECTROMETRY [LARGE SCALE ANALYSIS]</scope>
    <source>
        <tissue>Erythroleukemia</tissue>
    </source>
</reference>
<reference key="14">
    <citation type="journal article" date="2014" name="J. Proteomics">
        <title>An enzyme assisted RP-RPLC approach for in-depth analysis of human liver phosphoproteome.</title>
        <authorList>
            <person name="Bian Y."/>
            <person name="Song C."/>
            <person name="Cheng K."/>
            <person name="Dong M."/>
            <person name="Wang F."/>
            <person name="Huang J."/>
            <person name="Sun D."/>
            <person name="Wang L."/>
            <person name="Ye M."/>
            <person name="Zou H."/>
        </authorList>
    </citation>
    <scope>PHOSPHORYLATION [LARGE SCALE ANALYSIS] AT SER-415</scope>
    <scope>IDENTIFICATION BY MASS SPECTROMETRY [LARGE SCALE ANALYSIS]</scope>
    <source>
        <tissue>Liver</tissue>
    </source>
</reference>
<reference key="15">
    <citation type="journal article" date="1999" name="EMBO J.">
        <title>Molecular basis of glutathione synthetase deficiency and a rare gene permutation event.</title>
        <authorList>
            <person name="Polekhina G."/>
            <person name="Board P.G."/>
            <person name="Gali R.R."/>
            <person name="Rossjohn J."/>
            <person name="Parker M.W."/>
        </authorList>
    </citation>
    <scope>X-RAY CRYSTALLOGRAPHY (2.10 ANGSTROMS) OF 1-474 IN COMPLEX WITH ADP AND GLUTATHIONE</scope>
    <scope>FUNCTION</scope>
    <scope>COFACTOR</scope>
    <scope>SUBUNIT</scope>
</reference>
<reference key="16">
    <citation type="journal article" date="1996" name="Nat. Genet.">
        <title>Mutations in the glutathione synthetase gene cause 5-oxoprolinuria.</title>
        <authorList>
            <person name="Shi Z.-Z."/>
            <person name="Habib G.M."/>
            <person name="Rhead W.J."/>
            <person name="Gahl W.A."/>
            <person name="He X."/>
            <person name="Sazer S."/>
            <person name="Lieberman M.W."/>
        </authorList>
    </citation>
    <scope>VARIANTS GSSD CYS-125; TRP-267 AND CYS-283</scope>
    <scope>VARIANT CNSHA6 GLY-219</scope>
    <scope>VARIANT LEU-314</scope>
    <scope>INVOLVEMENT IN CNSHA6</scope>
</reference>
<reference key="17">
    <citation type="journal article" date="1997" name="Hum. Mol. Genet.">
        <title>Missense mutations in the human glutathione synthetase gene result in severe metabolic acidosis, 5-oxoprolinuria, hemolytic anemia and neurological dysfunction.</title>
        <authorList>
            <person name="Dahl N."/>
            <person name="Pigg M."/>
            <person name="Ristoff E."/>
            <person name="Gali R."/>
            <person name="Carlsson B."/>
            <person name="Mannervik B."/>
            <person name="Larsson A."/>
            <person name="Board P."/>
        </authorList>
    </citation>
    <scope>VARIANTS GSSD ASP-26; PRO-188; ARG-254; TRP-267; CYS-270; HIS-270; CYS-283; VAL-464 AND GLU-469</scope>
    <scope>VARIANTS CNSHA6 GLY-219; GLN-286 AND CYS-330</scope>
    <scope>CHARACTERIZATION OF VARIANTS GSSD PRO-188; CYS-270; HIS-270 AND CYS-283</scope>
    <scope>FUNCTION</scope>
    <scope>CATALYTIC ACTIVITY</scope>
    <scope>PATHWAY</scope>
</reference>
<reference key="18">
    <citation type="journal article" date="2016" name="Pediatrics">
        <title>Recurrent isolated neonatal hemolytic anemia: think about glutathione synthetase deficiency.</title>
        <authorList>
            <person name="Signolet I."/>
            <person name="Chenouard R."/>
            <person name="Oca F."/>
            <person name="Barth M."/>
            <person name="Reynier P."/>
            <person name="Denis M.C."/>
            <person name="Simard G."/>
        </authorList>
    </citation>
    <scope>VARIANTS CNSHA6 GLY-219 AND PRO-301</scope>
</reference>
<feature type="initiator methionine" description="Removed" evidence="15 16">
    <location>
        <position position="1"/>
    </location>
</feature>
<feature type="chain" id="PRO_0000211260" description="Glutathione synthetase">
    <location>
        <begin position="2"/>
        <end position="474"/>
    </location>
</feature>
<feature type="binding site">
    <location>
        <position position="125"/>
    </location>
    <ligand>
        <name>substrate</name>
    </ligand>
</feature>
<feature type="binding site">
    <location>
        <position position="144"/>
    </location>
    <ligand>
        <name>ATP</name>
        <dbReference type="ChEBI" id="CHEBI:30616"/>
    </ligand>
</feature>
<feature type="binding site">
    <location>
        <position position="144"/>
    </location>
    <ligand>
        <name>Mg(2+)</name>
        <dbReference type="ChEBI" id="CHEBI:18420"/>
    </ligand>
</feature>
<feature type="binding site">
    <location>
        <position position="146"/>
    </location>
    <ligand>
        <name>Mg(2+)</name>
        <dbReference type="ChEBI" id="CHEBI:18420"/>
    </ligand>
</feature>
<feature type="binding site">
    <location>
        <begin position="148"/>
        <end position="151"/>
    </location>
    <ligand>
        <name>substrate</name>
    </ligand>
</feature>
<feature type="binding site">
    <location>
        <begin position="214"/>
        <end position="216"/>
    </location>
    <ligand>
        <name>substrate</name>
    </ligand>
</feature>
<feature type="binding site">
    <location>
        <position position="220"/>
    </location>
    <ligand>
        <name>substrate</name>
    </ligand>
</feature>
<feature type="binding site">
    <location>
        <begin position="267"/>
        <end position="270"/>
    </location>
    <ligand>
        <name>substrate</name>
    </ligand>
</feature>
<feature type="binding site">
    <location>
        <position position="305"/>
    </location>
    <ligand>
        <name>ATP</name>
        <dbReference type="ChEBI" id="CHEBI:30616"/>
    </ligand>
</feature>
<feature type="binding site">
    <location>
        <begin position="364"/>
        <end position="373"/>
    </location>
    <ligand>
        <name>ATP</name>
        <dbReference type="ChEBI" id="CHEBI:30616"/>
    </ligand>
</feature>
<feature type="binding site">
    <location>
        <position position="368"/>
    </location>
    <ligand>
        <name>Mg(2+)</name>
        <dbReference type="ChEBI" id="CHEBI:18420"/>
    </ligand>
</feature>
<feature type="binding site">
    <location>
        <position position="375"/>
    </location>
    <ligand>
        <name>ATP</name>
        <dbReference type="ChEBI" id="CHEBI:30616"/>
    </ligand>
</feature>
<feature type="binding site">
    <location>
        <begin position="398"/>
        <end position="401"/>
    </location>
    <ligand>
        <name>ATP</name>
        <dbReference type="ChEBI" id="CHEBI:30616"/>
    </ligand>
</feature>
<feature type="binding site">
    <location>
        <position position="425"/>
    </location>
    <ligand>
        <name>ATP</name>
        <dbReference type="ChEBI" id="CHEBI:30616"/>
    </ligand>
</feature>
<feature type="binding site">
    <location>
        <position position="450"/>
    </location>
    <ligand>
        <name>substrate</name>
    </ligand>
</feature>
<feature type="binding site">
    <location>
        <position position="452"/>
    </location>
    <ligand>
        <name>ATP</name>
        <dbReference type="ChEBI" id="CHEBI:30616"/>
    </ligand>
</feature>
<feature type="binding site">
    <location>
        <position position="458"/>
    </location>
    <ligand>
        <name>ATP</name>
        <dbReference type="ChEBI" id="CHEBI:30616"/>
    </ligand>
</feature>
<feature type="binding site">
    <location>
        <begin position="461"/>
        <end position="462"/>
    </location>
    <ligand>
        <name>substrate</name>
    </ligand>
</feature>
<feature type="modified residue" description="N-acetylalanine" evidence="15 16">
    <location>
        <position position="2"/>
    </location>
</feature>
<feature type="modified residue" description="Phosphoserine" evidence="17 18">
    <location>
        <position position="415"/>
    </location>
</feature>
<feature type="splice variant" id="VSP_047617" description="In isoform 2." evidence="10">
    <location>
        <begin position="93"/>
        <end position="203"/>
    </location>
</feature>
<feature type="sequence variant" id="VAR_003602" description="In GSSD; dbSNP:rs759253242." evidence="7">
    <original>A</original>
    <variation>D</variation>
    <location>
        <position position="26"/>
    </location>
</feature>
<feature type="sequence variant" id="VAR_090059" description="In GSSD." evidence="6">
    <original>R</original>
    <variation>C</variation>
    <location>
        <position position="125"/>
    </location>
</feature>
<feature type="sequence variant" id="VAR_003603" description="In GSSD; 100-fold decreased glutathione synthase activity." evidence="7">
    <original>L</original>
    <variation>P</variation>
    <location>
        <position position="188"/>
    </location>
</feature>
<feature type="sequence variant" id="VAR_003604" description="In GSSD; dbSNP:rs28938472." evidence="7">
    <original>D</original>
    <variation>A</variation>
    <location>
        <position position="219"/>
    </location>
</feature>
<feature type="sequence variant" id="VAR_003605" description="In CNSHA6; dbSNP:rs28938472." evidence="4 6 7">
    <original>D</original>
    <variation>G</variation>
    <location>
        <position position="219"/>
    </location>
</feature>
<feature type="sequence variant" id="VAR_025047" description="In dbSNP:rs34239729." evidence="8">
    <original>R</original>
    <variation>Q</variation>
    <location>
        <position position="236"/>
    </location>
</feature>
<feature type="sequence variant" id="VAR_003606" description="In GSSD." evidence="7">
    <original>L</original>
    <variation>R</variation>
    <location>
        <position position="254"/>
    </location>
</feature>
<feature type="sequence variant" id="VAR_003607" description="In GSSD; dbSNP:rs121909308." evidence="6 7">
    <original>R</original>
    <variation>W</variation>
    <location>
        <position position="267"/>
    </location>
</feature>
<feature type="sequence variant" id="VAR_003608" description="In GSSD; 100-fold decreased glutathione synthase activity; dbSNP:rs1325986563." evidence="7">
    <original>Y</original>
    <variation>C</variation>
    <location>
        <position position="270"/>
    </location>
</feature>
<feature type="sequence variant" id="VAR_003609" description="In GSSD; 100-fold decreased glutathione synthase activity." evidence="7">
    <original>Y</original>
    <variation>H</variation>
    <location>
        <position position="270"/>
    </location>
</feature>
<feature type="sequence variant" id="VAR_003610" description="In GSSD; 10-fold decreased glutathione synthase activity; dbSNP:rs121909309." evidence="6 7">
    <original>R</original>
    <variation>C</variation>
    <location>
        <position position="283"/>
    </location>
</feature>
<feature type="sequence variant" id="VAR_003611" description="In CNSHA6; uncertain significance; dbSNP:rs1296000099." evidence="7">
    <original>L</original>
    <variation>Q</variation>
    <location>
        <position position="286"/>
    </location>
</feature>
<feature type="sequence variant" id="VAR_078567" description="In CNSHA6." evidence="4">
    <original>L</original>
    <variation>P</variation>
    <location>
        <position position="301"/>
    </location>
</feature>
<feature type="sequence variant" id="VAR_090060" evidence="6">
    <original>P</original>
    <variation>L</variation>
    <location>
        <position position="314"/>
    </location>
</feature>
<feature type="sequence variant" id="VAR_003612" description="In CNSHA6; uncertain significance; dbSNP:rs148640446." evidence="7">
    <original>R</original>
    <variation>C</variation>
    <location>
        <position position="330"/>
    </location>
</feature>
<feature type="sequence variant" id="VAR_025048" description="In dbSNP:rs34852238." evidence="3 8">
    <original>K</original>
    <variation>E</variation>
    <location>
        <position position="437"/>
    </location>
</feature>
<feature type="sequence variant" id="VAR_003613" description="In GSSD." evidence="7">
    <original>G</original>
    <variation>V</variation>
    <location>
        <position position="464"/>
    </location>
</feature>
<feature type="sequence variant" id="VAR_003614" description="In GSSD; dbSNP:rs1419704426." evidence="7">
    <original>D</original>
    <variation>E</variation>
    <location>
        <position position="469"/>
    </location>
</feature>
<feature type="helix" evidence="19">
    <location>
        <begin position="6"/>
        <end position="9"/>
    </location>
</feature>
<feature type="helix" evidence="19">
    <location>
        <begin position="12"/>
        <end position="28"/>
    </location>
</feature>
<feature type="strand" evidence="19">
    <location>
        <begin position="32"/>
        <end position="34"/>
    </location>
</feature>
<feature type="strand" evidence="19">
    <location>
        <begin position="43"/>
        <end position="47"/>
    </location>
</feature>
<feature type="strand" evidence="19">
    <location>
        <begin position="50"/>
        <end position="53"/>
    </location>
</feature>
<feature type="strand" evidence="19">
    <location>
        <begin position="56"/>
        <end position="58"/>
    </location>
</feature>
<feature type="helix" evidence="19">
    <location>
        <begin position="59"/>
        <end position="67"/>
    </location>
</feature>
<feature type="helix" evidence="19">
    <location>
        <begin position="69"/>
        <end position="81"/>
    </location>
</feature>
<feature type="helix" evidence="19">
    <location>
        <begin position="83"/>
        <end position="91"/>
    </location>
</feature>
<feature type="helix" evidence="19">
    <location>
        <begin position="93"/>
        <end position="96"/>
    </location>
</feature>
<feature type="helix" evidence="19">
    <location>
        <begin position="98"/>
        <end position="113"/>
    </location>
</feature>
<feature type="strand" evidence="19">
    <location>
        <begin position="119"/>
        <end position="132"/>
    </location>
</feature>
<feature type="strand" evidence="19">
    <location>
        <begin position="134"/>
        <end position="136"/>
    </location>
</feature>
<feature type="strand" evidence="19">
    <location>
        <begin position="138"/>
        <end position="146"/>
    </location>
</feature>
<feature type="helix" evidence="19">
    <location>
        <begin position="153"/>
        <end position="158"/>
    </location>
</feature>
<feature type="helix" evidence="19">
    <location>
        <begin position="160"/>
        <end position="169"/>
    </location>
</feature>
<feature type="helix" evidence="19">
    <location>
        <begin position="173"/>
        <end position="176"/>
    </location>
</feature>
<feature type="helix" evidence="19">
    <location>
        <begin position="184"/>
        <end position="199"/>
    </location>
</feature>
<feature type="strand" evidence="19">
    <location>
        <begin position="205"/>
        <end position="209"/>
    </location>
</feature>
<feature type="helix" evidence="19">
    <location>
        <begin position="217"/>
        <end position="228"/>
    </location>
</feature>
<feature type="turn" evidence="19">
    <location>
        <begin position="229"/>
        <end position="231"/>
    </location>
</feature>
<feature type="strand" evidence="19">
    <location>
        <begin position="234"/>
        <end position="237"/>
    </location>
</feature>
<feature type="helix" evidence="19">
    <location>
        <begin position="239"/>
        <end position="245"/>
    </location>
</feature>
<feature type="strand" evidence="19">
    <location>
        <begin position="246"/>
        <end position="248"/>
    </location>
</feature>
<feature type="strand" evidence="19">
    <location>
        <begin position="254"/>
        <end position="256"/>
    </location>
</feature>
<feature type="strand" evidence="19">
    <location>
        <begin position="259"/>
        <end position="268"/>
    </location>
</feature>
<feature type="helix" evidence="19">
    <location>
        <begin position="272"/>
        <end position="274"/>
    </location>
</feature>
<feature type="helix" evidence="19">
    <location>
        <begin position="277"/>
        <end position="288"/>
    </location>
</feature>
<feature type="strand" evidence="19">
    <location>
        <begin position="289"/>
        <end position="295"/>
    </location>
</feature>
<feature type="helix" evidence="19">
    <location>
        <begin position="297"/>
        <end position="301"/>
    </location>
</feature>
<feature type="helix" evidence="19">
    <location>
        <begin position="305"/>
        <end position="310"/>
    </location>
</feature>
<feature type="helix" evidence="19">
    <location>
        <begin position="316"/>
        <end position="320"/>
    </location>
</feature>
<feature type="helix" evidence="19">
    <location>
        <begin position="325"/>
        <end position="333"/>
    </location>
</feature>
<feature type="strand" evidence="19">
    <location>
        <begin position="338"/>
        <end position="340"/>
    </location>
</feature>
<feature type="strand" evidence="19">
    <location>
        <begin position="342"/>
        <end position="344"/>
    </location>
</feature>
<feature type="helix" evidence="19">
    <location>
        <begin position="345"/>
        <end position="356"/>
    </location>
</feature>
<feature type="helix" evidence="19">
    <location>
        <begin position="358"/>
        <end position="360"/>
    </location>
</feature>
<feature type="strand" evidence="19">
    <location>
        <begin position="361"/>
        <end position="366"/>
    </location>
</feature>
<feature type="strand" evidence="19">
    <location>
        <begin position="369"/>
        <end position="371"/>
    </location>
</feature>
<feature type="helix" evidence="19">
    <location>
        <begin position="376"/>
        <end position="386"/>
    </location>
</feature>
<feature type="helix" evidence="19">
    <location>
        <begin position="390"/>
        <end position="394"/>
    </location>
</feature>
<feature type="strand" evidence="19">
    <location>
        <begin position="395"/>
        <end position="399"/>
    </location>
</feature>
<feature type="strand" evidence="19">
    <location>
        <begin position="406"/>
        <end position="411"/>
    </location>
</feature>
<feature type="strand" evidence="19">
    <location>
        <begin position="418"/>
        <end position="435"/>
    </location>
</feature>
<feature type="strand" evidence="19">
    <location>
        <begin position="438"/>
        <end position="453"/>
    </location>
</feature>
<feature type="turn" evidence="19">
    <location>
        <begin position="461"/>
        <end position="464"/>
    </location>
</feature>
<feature type="strand" evidence="19">
    <location>
        <begin position="467"/>
        <end position="469"/>
    </location>
</feature>
<feature type="strand" evidence="19">
    <location>
        <begin position="472"/>
        <end position="474"/>
    </location>
</feature>